<keyword id="KW-0496">Mitochondrion</keyword>
<keyword id="KW-0809">Transit peptide</keyword>
<evidence type="ECO:0000250" key="1"/>
<evidence type="ECO:0000255" key="2"/>
<evidence type="ECO:0000256" key="3">
    <source>
        <dbReference type="SAM" id="MobiDB-lite"/>
    </source>
</evidence>
<evidence type="ECO:0000305" key="4"/>
<proteinExistence type="inferred from homology"/>
<organism>
    <name type="scientific">Paracoccidioides brasiliensis (strain Pb03)</name>
    <dbReference type="NCBI Taxonomy" id="482561"/>
    <lineage>
        <taxon>Eukaryota</taxon>
        <taxon>Fungi</taxon>
        <taxon>Dikarya</taxon>
        <taxon>Ascomycota</taxon>
        <taxon>Pezizomycotina</taxon>
        <taxon>Eurotiomycetes</taxon>
        <taxon>Eurotiomycetidae</taxon>
        <taxon>Onygenales</taxon>
        <taxon>Ajellomycetaceae</taxon>
        <taxon>Paracoccidioides</taxon>
    </lineage>
</organism>
<reference key="1">
    <citation type="journal article" date="2011" name="PLoS Genet.">
        <title>Comparative genomic analysis of human fungal pathogens causing paracoccidioidomycosis.</title>
        <authorList>
            <person name="Desjardins C.A."/>
            <person name="Champion M.D."/>
            <person name="Holder J.W."/>
            <person name="Muszewska A."/>
            <person name="Goldberg J."/>
            <person name="Bailao A.M."/>
            <person name="Brigido M.M."/>
            <person name="Ferreira M.E."/>
            <person name="Garcia A.M."/>
            <person name="Grynberg M."/>
            <person name="Gujja S."/>
            <person name="Heiman D.I."/>
            <person name="Henn M.R."/>
            <person name="Kodira C.D."/>
            <person name="Leon-Narvaez H."/>
            <person name="Longo L.V.G."/>
            <person name="Ma L.-J."/>
            <person name="Malavazi I."/>
            <person name="Matsuo A.L."/>
            <person name="Morais F.V."/>
            <person name="Pereira M."/>
            <person name="Rodriguez-Brito S."/>
            <person name="Sakthikumar S."/>
            <person name="Salem-Izacc S.M."/>
            <person name="Sykes S.M."/>
            <person name="Teixeira M.M."/>
            <person name="Vallejo M.C."/>
            <person name="Walter M.E."/>
            <person name="Yandava C."/>
            <person name="Young S."/>
            <person name="Zeng Q."/>
            <person name="Zucker J."/>
            <person name="Felipe M.S."/>
            <person name="Goldman G.H."/>
            <person name="Haas B.J."/>
            <person name="McEwen J.G."/>
            <person name="Nino-Vega G."/>
            <person name="Puccia R."/>
            <person name="San-Blas G."/>
            <person name="Soares C.M."/>
            <person name="Birren B.W."/>
            <person name="Cuomo C.A."/>
        </authorList>
    </citation>
    <scope>NUCLEOTIDE SEQUENCE [LARGE SCALE GENOMIC DNA]</scope>
    <source>
        <strain>Pb03</strain>
    </source>
</reference>
<protein>
    <recommendedName>
        <fullName>Required for respiratory growth protein 9, mitochondrial</fullName>
    </recommendedName>
</protein>
<gene>
    <name type="primary">RRG9</name>
    <name type="ORF">PABG_05230</name>
</gene>
<feature type="transit peptide" description="Mitochondrion" evidence="2">
    <location>
        <begin position="1"/>
        <end position="68"/>
    </location>
</feature>
<feature type="chain" id="PRO_0000407955" description="Required for respiratory growth protein 9, mitochondrial">
    <location>
        <begin position="69"/>
        <end position="273"/>
    </location>
</feature>
<feature type="region of interest" description="Disordered" evidence="3">
    <location>
        <begin position="71"/>
        <end position="149"/>
    </location>
</feature>
<feature type="compositionally biased region" description="Polar residues" evidence="3">
    <location>
        <begin position="77"/>
        <end position="88"/>
    </location>
</feature>
<feature type="compositionally biased region" description="Basic and acidic residues" evidence="3">
    <location>
        <begin position="89"/>
        <end position="101"/>
    </location>
</feature>
<feature type="compositionally biased region" description="Basic and acidic residues" evidence="3">
    <location>
        <begin position="139"/>
        <end position="148"/>
    </location>
</feature>
<name>RRG9_PARBP</name>
<dbReference type="EMBL" id="KN305538">
    <property type="protein sequence ID" value="EEH23019.2"/>
    <property type="molecule type" value="Genomic_DNA"/>
</dbReference>
<dbReference type="VEuPathDB" id="FungiDB:PABG_05230"/>
<dbReference type="HOGENOM" id="CLU_081333_0_0_1"/>
<dbReference type="OrthoDB" id="40265at33183"/>
<dbReference type="GO" id="GO:0005739">
    <property type="term" value="C:mitochondrion"/>
    <property type="evidence" value="ECO:0007669"/>
    <property type="project" value="UniProtKB-SubCell"/>
</dbReference>
<dbReference type="GO" id="GO:0005634">
    <property type="term" value="C:nucleus"/>
    <property type="evidence" value="ECO:0007669"/>
    <property type="project" value="TreeGrafter"/>
</dbReference>
<dbReference type="InterPro" id="IPR010487">
    <property type="entry name" value="NGRN/Rrg9"/>
</dbReference>
<dbReference type="PANTHER" id="PTHR13475">
    <property type="entry name" value="NEUGRIN"/>
    <property type="match status" value="1"/>
</dbReference>
<dbReference type="PANTHER" id="PTHR13475:SF3">
    <property type="entry name" value="NEUGRIN"/>
    <property type="match status" value="1"/>
</dbReference>
<dbReference type="Pfam" id="PF06413">
    <property type="entry name" value="Neugrin"/>
    <property type="match status" value="1"/>
</dbReference>
<accession>C0SC25</accession>
<sequence length="273" mass="31097">MLKPSSLPSPLAVPGLLRSFLGVRLALPATYRKYSLTAPCPTCSVTRPSPKCWQSLSRRQFSKSPTILLHLSDTPEKPQNSSSTLEQSHQQEELKPDRDSNDSSSKPAEMVSPMGPKSKAEFTGSRSARATGGKAGRASKSDKLDAPQKLEPWQIQKQALKKKFPEGWNPRKRLHPDTLDVIRHLHQQDPKKYTTPFLAQEYKVSPEAIRRILKSKWQPSEEVIAERRERWERRHKRIWNQLAEIGVRPQRSKFADLSDTRILYGSRRTASSK</sequence>
<comment type="function">
    <text evidence="1">Required for respiratory activity and maintenance and expression of the mitochondrial genome.</text>
</comment>
<comment type="subcellular location">
    <subcellularLocation>
        <location evidence="1">Mitochondrion</location>
    </subcellularLocation>
</comment>
<comment type="similarity">
    <text evidence="4">Belongs to the RRG9 family.</text>
</comment>